<reference key="1">
    <citation type="journal article" date="2005" name="Nature">
        <title>Generation and annotation of the DNA sequences of human chromosomes 2 and 4.</title>
        <authorList>
            <person name="Hillier L.W."/>
            <person name="Graves T.A."/>
            <person name="Fulton R.S."/>
            <person name="Fulton L.A."/>
            <person name="Pepin K.H."/>
            <person name="Minx P."/>
            <person name="Wagner-McPherson C."/>
            <person name="Layman D."/>
            <person name="Wylie K."/>
            <person name="Sekhon M."/>
            <person name="Becker M.C."/>
            <person name="Fewell G.A."/>
            <person name="Delehaunty K.D."/>
            <person name="Miner T.L."/>
            <person name="Nash W.E."/>
            <person name="Kremitzki C."/>
            <person name="Oddy L."/>
            <person name="Du H."/>
            <person name="Sun H."/>
            <person name="Bradshaw-Cordum H."/>
            <person name="Ali J."/>
            <person name="Carter J."/>
            <person name="Cordes M."/>
            <person name="Harris A."/>
            <person name="Isak A."/>
            <person name="van Brunt A."/>
            <person name="Nguyen C."/>
            <person name="Du F."/>
            <person name="Courtney L."/>
            <person name="Kalicki J."/>
            <person name="Ozersky P."/>
            <person name="Abbott S."/>
            <person name="Armstrong J."/>
            <person name="Belter E.A."/>
            <person name="Caruso L."/>
            <person name="Cedroni M."/>
            <person name="Cotton M."/>
            <person name="Davidson T."/>
            <person name="Desai A."/>
            <person name="Elliott G."/>
            <person name="Erb T."/>
            <person name="Fronick C."/>
            <person name="Gaige T."/>
            <person name="Haakenson W."/>
            <person name="Haglund K."/>
            <person name="Holmes A."/>
            <person name="Harkins R."/>
            <person name="Kim K."/>
            <person name="Kruchowski S.S."/>
            <person name="Strong C.M."/>
            <person name="Grewal N."/>
            <person name="Goyea E."/>
            <person name="Hou S."/>
            <person name="Levy A."/>
            <person name="Martinka S."/>
            <person name="Mead K."/>
            <person name="McLellan M.D."/>
            <person name="Meyer R."/>
            <person name="Randall-Maher J."/>
            <person name="Tomlinson C."/>
            <person name="Dauphin-Kohlberg S."/>
            <person name="Kozlowicz-Reilly A."/>
            <person name="Shah N."/>
            <person name="Swearengen-Shahid S."/>
            <person name="Snider J."/>
            <person name="Strong J.T."/>
            <person name="Thompson J."/>
            <person name="Yoakum M."/>
            <person name="Leonard S."/>
            <person name="Pearman C."/>
            <person name="Trani L."/>
            <person name="Radionenko M."/>
            <person name="Waligorski J.E."/>
            <person name="Wang C."/>
            <person name="Rock S.M."/>
            <person name="Tin-Wollam A.-M."/>
            <person name="Maupin R."/>
            <person name="Latreille P."/>
            <person name="Wendl M.C."/>
            <person name="Yang S.-P."/>
            <person name="Pohl C."/>
            <person name="Wallis J.W."/>
            <person name="Spieth J."/>
            <person name="Bieri T.A."/>
            <person name="Berkowicz N."/>
            <person name="Nelson J.O."/>
            <person name="Osborne J."/>
            <person name="Ding L."/>
            <person name="Meyer R."/>
            <person name="Sabo A."/>
            <person name="Shotland Y."/>
            <person name="Sinha P."/>
            <person name="Wohldmann P.E."/>
            <person name="Cook L.L."/>
            <person name="Hickenbotham M.T."/>
            <person name="Eldred J."/>
            <person name="Williams D."/>
            <person name="Jones T.A."/>
            <person name="She X."/>
            <person name="Ciccarelli F.D."/>
            <person name="Izaurralde E."/>
            <person name="Taylor J."/>
            <person name="Schmutz J."/>
            <person name="Myers R.M."/>
            <person name="Cox D.R."/>
            <person name="Huang X."/>
            <person name="McPherson J.D."/>
            <person name="Mardis E.R."/>
            <person name="Clifton S.W."/>
            <person name="Warren W.C."/>
            <person name="Chinwalla A.T."/>
            <person name="Eddy S.R."/>
            <person name="Marra M.A."/>
            <person name="Ovcharenko I."/>
            <person name="Furey T.S."/>
            <person name="Miller W."/>
            <person name="Eichler E.E."/>
            <person name="Bork P."/>
            <person name="Suyama M."/>
            <person name="Torrents D."/>
            <person name="Waterston R.H."/>
            <person name="Wilson R.K."/>
        </authorList>
    </citation>
    <scope>NUCLEOTIDE SEQUENCE [LARGE SCALE GENOMIC DNA] (IMGT ALLELE IGKV3D-11*02)</scope>
</reference>
<reference key="2">
    <citation type="journal article" date="2001" name="Exp. Clin. Immunogenet.">
        <title>Nomenclature of the human immunoglobulin kappa (IGK) genes.</title>
        <authorList>
            <person name="Lefranc M.P."/>
        </authorList>
    </citation>
    <scope>NOMEMCLATURE</scope>
</reference>
<reference key="3">
    <citation type="book" date="2001" name="The Immunoglobulin FactsBook.">
        <title>The Immunoglobulin FactsBook.</title>
        <editorList>
            <person name="Lefranc M.P."/>
            <person name="Lefranc G."/>
        </editorList>
        <authorList>
            <person name="Lefranc M.P."/>
            <person name="Lefranc G."/>
        </authorList>
    </citation>
    <scope>NOMENCLATURE</scope>
</reference>
<reference key="4">
    <citation type="journal article" date="2007" name="Annu. Rev. Genet.">
        <title>Immunoglobulin somatic hypermutation.</title>
        <authorList>
            <person name="Teng G."/>
            <person name="Papavasiliou F.N."/>
        </authorList>
    </citation>
    <scope>REVIEW ON SOMATIC HYPERMUTATION</scope>
</reference>
<reference key="5">
    <citation type="journal article" date="2010" name="J. Allergy Clin. Immunol.">
        <title>Structure and function of immunoglobulins.</title>
        <authorList>
            <person name="Schroeder H.W. Jr."/>
            <person name="Cavacini L."/>
        </authorList>
    </citation>
    <scope>REVIEW ON IMMUNOGLOBULINS</scope>
</reference>
<reference key="6">
    <citation type="journal article" date="2012" name="Nat. Rev. Immunol.">
        <title>Molecular programming of B cell memory.</title>
        <authorList>
            <person name="McHeyzer-Williams M."/>
            <person name="Okitsu S."/>
            <person name="Wang N."/>
            <person name="McHeyzer-Williams L."/>
        </authorList>
    </citation>
    <scope>REVIEW ON FUNCTION</scope>
</reference>
<reference key="7">
    <citation type="journal article" date="2014" name="Front. Immunol.">
        <title>Immunoglobulin and T Cell Receptor Genes: IMGT((R)) and the Birth and Rise of Immunoinformatics.</title>
        <authorList>
            <person name="Lefranc M.P."/>
        </authorList>
    </citation>
    <scope>NOMENCLATURE</scope>
</reference>
<gene>
    <name evidence="4 9" type="primary">IGKV3D-11</name>
</gene>
<organism>
    <name type="scientific">Homo sapiens</name>
    <name type="common">Human</name>
    <dbReference type="NCBI Taxonomy" id="9606"/>
    <lineage>
        <taxon>Eukaryota</taxon>
        <taxon>Metazoa</taxon>
        <taxon>Chordata</taxon>
        <taxon>Craniata</taxon>
        <taxon>Vertebrata</taxon>
        <taxon>Euteleostomi</taxon>
        <taxon>Mammalia</taxon>
        <taxon>Eutheria</taxon>
        <taxon>Euarchontoglires</taxon>
        <taxon>Primates</taxon>
        <taxon>Haplorrhini</taxon>
        <taxon>Catarrhini</taxon>
        <taxon>Hominidae</taxon>
        <taxon>Homo</taxon>
    </lineage>
</organism>
<feature type="signal peptide" evidence="2">
    <location>
        <begin position="1"/>
        <end position="20"/>
    </location>
</feature>
<feature type="chain" id="PRO_5008202299" description="Immunoglobulin kappa variable 3D-11" evidence="2">
    <location>
        <begin position="21"/>
        <end position="115"/>
    </location>
</feature>
<feature type="domain" description="Ig-like" evidence="3">
    <location>
        <begin position="21"/>
        <end position="115" status="greater than"/>
    </location>
</feature>
<feature type="region of interest" description="Framework-1" evidence="1">
    <location>
        <begin position="21"/>
        <end position="43"/>
    </location>
</feature>
<feature type="region of interest" description="Complementarity-determining-1" evidence="1">
    <location>
        <begin position="44"/>
        <end position="54"/>
    </location>
</feature>
<feature type="region of interest" description="Framework-2" evidence="1">
    <location>
        <begin position="55"/>
        <end position="69"/>
    </location>
</feature>
<feature type="region of interest" description="Complementarity-determining-2" evidence="1">
    <location>
        <begin position="70"/>
        <end position="76"/>
    </location>
</feature>
<feature type="region of interest" description="Framework-3" evidence="1">
    <location>
        <begin position="77"/>
        <end position="108"/>
    </location>
</feature>
<feature type="region of interest" description="Complementarity-determining-3" evidence="1">
    <location>
        <begin position="109"/>
        <end position="115" status="greater than"/>
    </location>
</feature>
<feature type="disulfide bond" evidence="3">
    <location>
        <begin position="43"/>
        <end position="108"/>
    </location>
</feature>
<feature type="non-terminal residue">
    <location>
        <position position="115"/>
    </location>
</feature>
<comment type="function">
    <text evidence="5 6 7 8">V region of the variable domain of immunoglobulin light chains that participates in the antigen recognition (PubMed:24600447). Immunoglobulins, also known as antibodies, are membrane-bound or secreted glycoproteins produced by B lymphocytes. In the recognition phase of humoral immunity, the membrane-bound immunoglobulins serve as receptors which, upon binding of a specific antigen, trigger the clonal expansion and differentiation of B lymphocytes into immunoglobulins-secreting plasma cells. Secreted immunoglobulins mediate the effector phase of humoral immunity, which results in the elimination of bound antigens (PubMed:20176268, PubMed:22158414). The antigen binding site is formed by the variable domain of one heavy chain, together with that of its associated light chain. Thus, each immunoglobulin has two antigen binding sites with remarkable affinity for a particular antigen. The variable domains are assembled by a process called V-(D)-J rearrangement and can then be subjected to somatic hypermutations which, after exposure to antigen and selection, allow affinity maturation for a particular antigen (PubMed:17576170, PubMed:20176268).</text>
</comment>
<comment type="subunit">
    <text evidence="6">Immunoglobulins are composed of two identical heavy chains and two identical light chains; disulfide-linked.</text>
</comment>
<comment type="subcellular location">
    <subcellularLocation>
        <location evidence="6 7">Secreted</location>
    </subcellularLocation>
    <subcellularLocation>
        <location evidence="6 7">Cell membrane</location>
    </subcellularLocation>
</comment>
<comment type="polymorphism">
    <text>There are several alleles. The sequence shown is that of IMGT allele IGKV3D-11*02.</text>
</comment>
<comment type="caution">
    <text evidence="10">For an example of a full-length immunoglobulin kappa light chain see AC P0DOX7.</text>
</comment>
<accession>A0A0A0MRZ8</accession>
<sequence length="115" mass="12625">MEAPAQLLFLLLLWLPDTTGEIVLTQSPATLSLSPGERATLSCRASQSVSSYLAWYQQKPGQAPRLLIYDASNRATGIPARFSGSGPGTDFTLTISSLEPEDFAVYYCQQRSNWH</sequence>
<protein>
    <recommendedName>
        <fullName evidence="4 9">Immunoglobulin kappa variable 3D-11</fullName>
    </recommendedName>
</protein>
<proteinExistence type="inferred from homology"/>
<name>KVD11_HUMAN</name>
<evidence type="ECO:0000250" key="1">
    <source>
        <dbReference type="UniProtKB" id="P01602"/>
    </source>
</evidence>
<evidence type="ECO:0000255" key="2"/>
<evidence type="ECO:0000255" key="3">
    <source>
        <dbReference type="PROSITE-ProRule" id="PRU00114"/>
    </source>
</evidence>
<evidence type="ECO:0000303" key="4">
    <source>
    </source>
</evidence>
<evidence type="ECO:0000303" key="5">
    <source>
    </source>
</evidence>
<evidence type="ECO:0000303" key="6">
    <source>
    </source>
</evidence>
<evidence type="ECO:0000303" key="7">
    <source>
    </source>
</evidence>
<evidence type="ECO:0000303" key="8">
    <source>
    </source>
</evidence>
<evidence type="ECO:0000303" key="9">
    <source ref="3"/>
</evidence>
<evidence type="ECO:0000305" key="10"/>
<dbReference type="EMBL" id="AC243981">
    <property type="status" value="NOT_ANNOTATED_CDS"/>
    <property type="molecule type" value="Genomic_DNA"/>
</dbReference>
<dbReference type="SMR" id="A0A0A0MRZ8"/>
<dbReference type="FunCoup" id="A0A0A0MRZ8">
    <property type="interactions" value="263"/>
</dbReference>
<dbReference type="IMGT_GENE-DB" id="IGKV3D-11"/>
<dbReference type="BioMuta" id="IGKV3D-11"/>
<dbReference type="jPOST" id="A0A0A0MRZ8"/>
<dbReference type="MassIVE" id="A0A0A0MRZ8"/>
<dbReference type="Ensembl" id="ENST00000390277.3">
    <property type="protein sequence ID" value="ENSP00000374812.3"/>
    <property type="gene ID" value="ENSG00000211632.4"/>
</dbReference>
<dbReference type="UCSC" id="uc032nuq.2">
    <property type="organism name" value="human"/>
</dbReference>
<dbReference type="AGR" id="HGNC:5823"/>
<dbReference type="GeneCards" id="IGKV3D-11"/>
<dbReference type="HGNC" id="HGNC:5823">
    <property type="gene designation" value="IGKV3D-11"/>
</dbReference>
<dbReference type="HPA" id="ENSG00000211632">
    <property type="expression patterns" value="Tissue enhanced (intestine, lymphoid tissue, stomach)"/>
</dbReference>
<dbReference type="neXtProt" id="NX_A0A0A0MRZ8"/>
<dbReference type="OpenTargets" id="ENSG00000211632"/>
<dbReference type="VEuPathDB" id="HostDB:ENSG00000211632"/>
<dbReference type="GeneTree" id="ENSGT00940000154413"/>
<dbReference type="InParanoid" id="A0A0A0MRZ8"/>
<dbReference type="OMA" id="QHETKTR"/>
<dbReference type="OrthoDB" id="9538307at2759"/>
<dbReference type="PAN-GO" id="A0A0A0MRZ8">
    <property type="GO annotations" value="3 GO annotations based on evolutionary models"/>
</dbReference>
<dbReference type="ChiTaRS" id="IGKV3D-11">
    <property type="organism name" value="human"/>
</dbReference>
<dbReference type="Pharos" id="A0A0A0MRZ8">
    <property type="development level" value="Tdark"/>
</dbReference>
<dbReference type="PRO" id="PR:A0A0A0MRZ8"/>
<dbReference type="Proteomes" id="UP000005640">
    <property type="component" value="Chromosome 2"/>
</dbReference>
<dbReference type="RNAct" id="A0A0A0MRZ8">
    <property type="molecule type" value="protein"/>
</dbReference>
<dbReference type="Bgee" id="ENSG00000211632">
    <property type="expression patterns" value="Expressed in male germ line stem cell (sensu Vertebrata) in testis and 82 other cell types or tissues"/>
</dbReference>
<dbReference type="GO" id="GO:0005576">
    <property type="term" value="C:extracellular region"/>
    <property type="evidence" value="ECO:0007669"/>
    <property type="project" value="UniProtKB-SubCell"/>
</dbReference>
<dbReference type="GO" id="GO:0019814">
    <property type="term" value="C:immunoglobulin complex"/>
    <property type="evidence" value="ECO:0000318"/>
    <property type="project" value="GO_Central"/>
</dbReference>
<dbReference type="GO" id="GO:0005886">
    <property type="term" value="C:plasma membrane"/>
    <property type="evidence" value="ECO:0007669"/>
    <property type="project" value="UniProtKB-SubCell"/>
</dbReference>
<dbReference type="GO" id="GO:0002250">
    <property type="term" value="P:adaptive immune response"/>
    <property type="evidence" value="ECO:0007669"/>
    <property type="project" value="UniProtKB-KW"/>
</dbReference>
<dbReference type="GO" id="GO:0006955">
    <property type="term" value="P:immune response"/>
    <property type="evidence" value="ECO:0000318"/>
    <property type="project" value="GO_Central"/>
</dbReference>
<dbReference type="CDD" id="cd04980">
    <property type="entry name" value="IgV_L_kappa"/>
    <property type="match status" value="1"/>
</dbReference>
<dbReference type="FunFam" id="2.60.40.10:FF:000350">
    <property type="entry name" value="Immunoglobulin kappa chain variable 18-36"/>
    <property type="match status" value="1"/>
</dbReference>
<dbReference type="Gene3D" id="2.60.40.10">
    <property type="entry name" value="Immunoglobulins"/>
    <property type="match status" value="1"/>
</dbReference>
<dbReference type="InterPro" id="IPR007110">
    <property type="entry name" value="Ig-like_dom"/>
</dbReference>
<dbReference type="InterPro" id="IPR036179">
    <property type="entry name" value="Ig-like_dom_sf"/>
</dbReference>
<dbReference type="InterPro" id="IPR013783">
    <property type="entry name" value="Ig-like_fold"/>
</dbReference>
<dbReference type="InterPro" id="IPR003599">
    <property type="entry name" value="Ig_sub"/>
</dbReference>
<dbReference type="InterPro" id="IPR013106">
    <property type="entry name" value="Ig_V-set"/>
</dbReference>
<dbReference type="InterPro" id="IPR050150">
    <property type="entry name" value="IgV_Light_Chain"/>
</dbReference>
<dbReference type="PANTHER" id="PTHR23267">
    <property type="entry name" value="IMMUNOGLOBULIN LIGHT CHAIN"/>
    <property type="match status" value="1"/>
</dbReference>
<dbReference type="Pfam" id="PF07686">
    <property type="entry name" value="V-set"/>
    <property type="match status" value="1"/>
</dbReference>
<dbReference type="SMART" id="SM00409">
    <property type="entry name" value="IG"/>
    <property type="match status" value="1"/>
</dbReference>
<dbReference type="SMART" id="SM00406">
    <property type="entry name" value="IGv"/>
    <property type="match status" value="1"/>
</dbReference>
<dbReference type="SUPFAM" id="SSF48726">
    <property type="entry name" value="Immunoglobulin"/>
    <property type="match status" value="1"/>
</dbReference>
<dbReference type="PROSITE" id="PS50835">
    <property type="entry name" value="IG_LIKE"/>
    <property type="match status" value="1"/>
</dbReference>
<keyword id="KW-1064">Adaptive immunity</keyword>
<keyword id="KW-1003">Cell membrane</keyword>
<keyword id="KW-1015">Disulfide bond</keyword>
<keyword id="KW-0391">Immunity</keyword>
<keyword id="KW-1280">Immunoglobulin</keyword>
<keyword id="KW-0393">Immunoglobulin domain</keyword>
<keyword id="KW-0472">Membrane</keyword>
<keyword id="KW-1185">Reference proteome</keyword>
<keyword id="KW-0964">Secreted</keyword>
<keyword id="KW-0732">Signal</keyword>